<keyword id="KW-0963">Cytoplasm</keyword>
<keyword id="KW-0251">Elongation factor</keyword>
<keyword id="KW-0648">Protein biosynthesis</keyword>
<proteinExistence type="inferred from homology"/>
<evidence type="ECO:0000255" key="1">
    <source>
        <dbReference type="HAMAP-Rule" id="MF_00050"/>
    </source>
</evidence>
<reference key="1">
    <citation type="journal article" date="2009" name="PLoS Genet.">
        <title>Organised genome dynamics in the Escherichia coli species results in highly diverse adaptive paths.</title>
        <authorList>
            <person name="Touchon M."/>
            <person name="Hoede C."/>
            <person name="Tenaillon O."/>
            <person name="Barbe V."/>
            <person name="Baeriswyl S."/>
            <person name="Bidet P."/>
            <person name="Bingen E."/>
            <person name="Bonacorsi S."/>
            <person name="Bouchier C."/>
            <person name="Bouvet O."/>
            <person name="Calteau A."/>
            <person name="Chiapello H."/>
            <person name="Clermont O."/>
            <person name="Cruveiller S."/>
            <person name="Danchin A."/>
            <person name="Diard M."/>
            <person name="Dossat C."/>
            <person name="Karoui M.E."/>
            <person name="Frapy E."/>
            <person name="Garry L."/>
            <person name="Ghigo J.M."/>
            <person name="Gilles A.M."/>
            <person name="Johnson J."/>
            <person name="Le Bouguenec C."/>
            <person name="Lescat M."/>
            <person name="Mangenot S."/>
            <person name="Martinez-Jehanne V."/>
            <person name="Matic I."/>
            <person name="Nassif X."/>
            <person name="Oztas S."/>
            <person name="Petit M.A."/>
            <person name="Pichon C."/>
            <person name="Rouy Z."/>
            <person name="Ruf C.S."/>
            <person name="Schneider D."/>
            <person name="Tourret J."/>
            <person name="Vacherie B."/>
            <person name="Vallenet D."/>
            <person name="Medigue C."/>
            <person name="Rocha E.P.C."/>
            <person name="Denamur E."/>
        </authorList>
    </citation>
    <scope>NUCLEOTIDE SEQUENCE [LARGE SCALE GENOMIC DNA]</scope>
    <source>
        <strain>ATCC 35469 / DSM 13698 / BCRC 15582 / CCUG 18766 / IAM 14443 / JCM 21226 / LMG 7866 / NBRC 102419 / NCTC 12128 / CDC 0568-73</strain>
    </source>
</reference>
<name>EFTS_ESCF3</name>
<feature type="chain" id="PRO_1000116737" description="Elongation factor Ts">
    <location>
        <begin position="1"/>
        <end position="283"/>
    </location>
</feature>
<feature type="region of interest" description="Involved in Mg(2+) ion dislocation from EF-Tu" evidence="1">
    <location>
        <begin position="80"/>
        <end position="83"/>
    </location>
</feature>
<gene>
    <name evidence="1" type="primary">tsf</name>
    <name type="ordered locus">EFER_0192</name>
</gene>
<organism>
    <name type="scientific">Escherichia fergusonii (strain ATCC 35469 / DSM 13698 / CCUG 18766 / IAM 14443 / JCM 21226 / LMG 7866 / NBRC 102419 / NCTC 12128 / CDC 0568-73)</name>
    <dbReference type="NCBI Taxonomy" id="585054"/>
    <lineage>
        <taxon>Bacteria</taxon>
        <taxon>Pseudomonadati</taxon>
        <taxon>Pseudomonadota</taxon>
        <taxon>Gammaproteobacteria</taxon>
        <taxon>Enterobacterales</taxon>
        <taxon>Enterobacteriaceae</taxon>
        <taxon>Escherichia</taxon>
    </lineage>
</organism>
<dbReference type="EMBL" id="CU928158">
    <property type="protein sequence ID" value="CAQ87773.1"/>
    <property type="molecule type" value="Genomic_DNA"/>
</dbReference>
<dbReference type="RefSeq" id="WP_000818114.1">
    <property type="nucleotide sequence ID" value="NC_011740.1"/>
</dbReference>
<dbReference type="SMR" id="B7LWA9"/>
<dbReference type="GeneID" id="93777255"/>
<dbReference type="KEGG" id="efe:EFER_0192"/>
<dbReference type="HOGENOM" id="CLU_047155_0_2_6"/>
<dbReference type="OrthoDB" id="9808348at2"/>
<dbReference type="Proteomes" id="UP000000745">
    <property type="component" value="Chromosome"/>
</dbReference>
<dbReference type="GO" id="GO:0005737">
    <property type="term" value="C:cytoplasm"/>
    <property type="evidence" value="ECO:0007669"/>
    <property type="project" value="UniProtKB-SubCell"/>
</dbReference>
<dbReference type="GO" id="GO:0003746">
    <property type="term" value="F:translation elongation factor activity"/>
    <property type="evidence" value="ECO:0007669"/>
    <property type="project" value="UniProtKB-UniRule"/>
</dbReference>
<dbReference type="CDD" id="cd14275">
    <property type="entry name" value="UBA_EF-Ts"/>
    <property type="match status" value="1"/>
</dbReference>
<dbReference type="FunFam" id="1.10.286.20:FF:000001">
    <property type="entry name" value="Elongation factor Ts"/>
    <property type="match status" value="1"/>
</dbReference>
<dbReference type="FunFam" id="1.10.8.10:FF:000001">
    <property type="entry name" value="Elongation factor Ts"/>
    <property type="match status" value="1"/>
</dbReference>
<dbReference type="FunFam" id="3.30.479.20:FF:000001">
    <property type="entry name" value="Elongation factor Ts"/>
    <property type="match status" value="1"/>
</dbReference>
<dbReference type="Gene3D" id="1.10.286.20">
    <property type="match status" value="1"/>
</dbReference>
<dbReference type="Gene3D" id="1.10.8.10">
    <property type="entry name" value="DNA helicase RuvA subunit, C-terminal domain"/>
    <property type="match status" value="1"/>
</dbReference>
<dbReference type="Gene3D" id="3.30.479.20">
    <property type="entry name" value="Elongation factor Ts, dimerisation domain"/>
    <property type="match status" value="2"/>
</dbReference>
<dbReference type="HAMAP" id="MF_00050">
    <property type="entry name" value="EF_Ts"/>
    <property type="match status" value="1"/>
</dbReference>
<dbReference type="InterPro" id="IPR036402">
    <property type="entry name" value="EF-Ts_dimer_sf"/>
</dbReference>
<dbReference type="InterPro" id="IPR001816">
    <property type="entry name" value="Transl_elong_EFTs/EF1B"/>
</dbReference>
<dbReference type="InterPro" id="IPR014039">
    <property type="entry name" value="Transl_elong_EFTs/EF1B_dimer"/>
</dbReference>
<dbReference type="InterPro" id="IPR018101">
    <property type="entry name" value="Transl_elong_Ts_CS"/>
</dbReference>
<dbReference type="InterPro" id="IPR009060">
    <property type="entry name" value="UBA-like_sf"/>
</dbReference>
<dbReference type="NCBIfam" id="TIGR00116">
    <property type="entry name" value="tsf"/>
    <property type="match status" value="1"/>
</dbReference>
<dbReference type="PANTHER" id="PTHR11741">
    <property type="entry name" value="ELONGATION FACTOR TS"/>
    <property type="match status" value="1"/>
</dbReference>
<dbReference type="PANTHER" id="PTHR11741:SF0">
    <property type="entry name" value="ELONGATION FACTOR TS, MITOCHONDRIAL"/>
    <property type="match status" value="1"/>
</dbReference>
<dbReference type="Pfam" id="PF00889">
    <property type="entry name" value="EF_TS"/>
    <property type="match status" value="1"/>
</dbReference>
<dbReference type="SUPFAM" id="SSF54713">
    <property type="entry name" value="Elongation factor Ts (EF-Ts), dimerisation domain"/>
    <property type="match status" value="2"/>
</dbReference>
<dbReference type="SUPFAM" id="SSF46934">
    <property type="entry name" value="UBA-like"/>
    <property type="match status" value="1"/>
</dbReference>
<dbReference type="PROSITE" id="PS01126">
    <property type="entry name" value="EF_TS_1"/>
    <property type="match status" value="1"/>
</dbReference>
<dbReference type="PROSITE" id="PS01127">
    <property type="entry name" value="EF_TS_2"/>
    <property type="match status" value="1"/>
</dbReference>
<protein>
    <recommendedName>
        <fullName evidence="1">Elongation factor Ts</fullName>
        <shortName evidence="1">EF-Ts</shortName>
    </recommendedName>
</protein>
<accession>B7LWA9</accession>
<comment type="function">
    <text evidence="1">Associates with the EF-Tu.GDP complex and induces the exchange of GDP to GTP. It remains bound to the aminoacyl-tRNA.EF-Tu.GTP complex up to the GTP hydrolysis stage on the ribosome.</text>
</comment>
<comment type="subcellular location">
    <subcellularLocation>
        <location evidence="1">Cytoplasm</location>
    </subcellularLocation>
</comment>
<comment type="similarity">
    <text evidence="1">Belongs to the EF-Ts family.</text>
</comment>
<sequence>MAEITASLVKELRERTGAGMMDCKKALTEANGDIELAIENMRKSGAIKAAKKAGNVAADGVIKTKIDGNYGIILEVNCQTDFVAKDAGFQAFADKVLDAAVAGKITDVEVLKAQFEEERVALVAKIGENINIRRVAALEGDVLGSYQHGARIGVLVAAKGADEELVKHIAMHVAASKPEFIKPEDVSAEVVEKEYQVQLDIAMQSGKPKEIAEKMVEGRMKKFTGEVSLTGQPFVMEPSKTVGQLLKEHNAEVTGFIRFEVGEGIEKVETDFAAEVAAMSKQS</sequence>